<sequence>MTRAGFTALDDELKTLKTVERPAVIRSIAEAREHGDLSENAEYHAAREKQSFIEGRIKELEAILSLAEVIDPAKLSGSIKFGATVTILDEETEEERTYQIVGEAEADIEAGLLNIKSPLARALIGKDEGDSIEVKTPGGERGYEVVSVRFV</sequence>
<organism>
    <name type="scientific">Cereibacter sphaeroides (strain ATCC 17023 / DSM 158 / JCM 6121 / CCUG 31486 / LMG 2827 / NBRC 12203 / NCIMB 8253 / ATH 2.4.1.)</name>
    <name type="common">Rhodobacter sphaeroides</name>
    <dbReference type="NCBI Taxonomy" id="272943"/>
    <lineage>
        <taxon>Bacteria</taxon>
        <taxon>Pseudomonadati</taxon>
        <taxon>Pseudomonadota</taxon>
        <taxon>Alphaproteobacteria</taxon>
        <taxon>Rhodobacterales</taxon>
        <taxon>Paracoccaceae</taxon>
        <taxon>Cereibacter</taxon>
    </lineage>
</organism>
<name>GREA_CERS4</name>
<accession>Q3J5L0</accession>
<protein>
    <recommendedName>
        <fullName evidence="1">Transcription elongation factor GreA</fullName>
    </recommendedName>
    <alternativeName>
        <fullName evidence="1">Transcript cleavage factor GreA</fullName>
    </alternativeName>
</protein>
<keyword id="KW-0175">Coiled coil</keyword>
<keyword id="KW-0238">DNA-binding</keyword>
<keyword id="KW-1185">Reference proteome</keyword>
<keyword id="KW-0804">Transcription</keyword>
<keyword id="KW-0805">Transcription regulation</keyword>
<reference key="1">
    <citation type="submission" date="2005-09" db="EMBL/GenBank/DDBJ databases">
        <title>Complete sequence of chromosome 1 of Rhodobacter sphaeroides 2.4.1.</title>
        <authorList>
            <person name="Copeland A."/>
            <person name="Lucas S."/>
            <person name="Lapidus A."/>
            <person name="Barry K."/>
            <person name="Detter J.C."/>
            <person name="Glavina T."/>
            <person name="Hammon N."/>
            <person name="Israni S."/>
            <person name="Pitluck S."/>
            <person name="Richardson P."/>
            <person name="Mackenzie C."/>
            <person name="Choudhary M."/>
            <person name="Larimer F."/>
            <person name="Hauser L.J."/>
            <person name="Land M."/>
            <person name="Donohue T.J."/>
            <person name="Kaplan S."/>
        </authorList>
    </citation>
    <scope>NUCLEOTIDE SEQUENCE [LARGE SCALE GENOMIC DNA]</scope>
    <source>
        <strain>ATCC 17023 / DSM 158 / JCM 6121 / CCUG 31486 / LMG 2827 / NBRC 12203 / NCIMB 8253 / ATH 2.4.1.</strain>
    </source>
</reference>
<feature type="chain" id="PRO_1000034292" description="Transcription elongation factor GreA">
    <location>
        <begin position="1"/>
        <end position="151"/>
    </location>
</feature>
<feature type="coiled-coil region" evidence="1">
    <location>
        <begin position="41"/>
        <end position="62"/>
    </location>
</feature>
<dbReference type="EMBL" id="CP000143">
    <property type="protein sequence ID" value="ABA77924.2"/>
    <property type="molecule type" value="Genomic_DNA"/>
</dbReference>
<dbReference type="RefSeq" id="YP_351825.2">
    <property type="nucleotide sequence ID" value="NC_007493.2"/>
</dbReference>
<dbReference type="SMR" id="Q3J5L0"/>
<dbReference type="STRING" id="272943.RSP_1776"/>
<dbReference type="EnsemblBacteria" id="ABA77924">
    <property type="protein sequence ID" value="ABA77924"/>
    <property type="gene ID" value="RSP_1776"/>
</dbReference>
<dbReference type="KEGG" id="rsp:RSP_1776"/>
<dbReference type="PATRIC" id="fig|272943.9.peg.656"/>
<dbReference type="eggNOG" id="COG0782">
    <property type="taxonomic scope" value="Bacteria"/>
</dbReference>
<dbReference type="OrthoDB" id="9808774at2"/>
<dbReference type="Proteomes" id="UP000002703">
    <property type="component" value="Chromosome 1"/>
</dbReference>
<dbReference type="GO" id="GO:0003677">
    <property type="term" value="F:DNA binding"/>
    <property type="evidence" value="ECO:0007669"/>
    <property type="project" value="UniProtKB-UniRule"/>
</dbReference>
<dbReference type="GO" id="GO:0070063">
    <property type="term" value="F:RNA polymerase binding"/>
    <property type="evidence" value="ECO:0007669"/>
    <property type="project" value="InterPro"/>
</dbReference>
<dbReference type="GO" id="GO:0006354">
    <property type="term" value="P:DNA-templated transcription elongation"/>
    <property type="evidence" value="ECO:0007669"/>
    <property type="project" value="TreeGrafter"/>
</dbReference>
<dbReference type="GO" id="GO:0032784">
    <property type="term" value="P:regulation of DNA-templated transcription elongation"/>
    <property type="evidence" value="ECO:0007669"/>
    <property type="project" value="UniProtKB-UniRule"/>
</dbReference>
<dbReference type="FunFam" id="1.10.287.180:FF:000001">
    <property type="entry name" value="Transcription elongation factor GreA"/>
    <property type="match status" value="1"/>
</dbReference>
<dbReference type="FunFam" id="3.10.50.30:FF:000001">
    <property type="entry name" value="Transcription elongation factor GreA"/>
    <property type="match status" value="1"/>
</dbReference>
<dbReference type="Gene3D" id="3.10.50.30">
    <property type="entry name" value="Transcription elongation factor, GreA/GreB, C-terminal domain"/>
    <property type="match status" value="1"/>
</dbReference>
<dbReference type="Gene3D" id="1.10.287.180">
    <property type="entry name" value="Transcription elongation factor, GreA/GreB, N-terminal domain"/>
    <property type="match status" value="1"/>
</dbReference>
<dbReference type="HAMAP" id="MF_00105">
    <property type="entry name" value="GreA_GreB"/>
    <property type="match status" value="1"/>
</dbReference>
<dbReference type="InterPro" id="IPR036953">
    <property type="entry name" value="GreA/GreB_C_sf"/>
</dbReference>
<dbReference type="InterPro" id="IPR018151">
    <property type="entry name" value="TF_GreA/GreB_CS"/>
</dbReference>
<dbReference type="InterPro" id="IPR006359">
    <property type="entry name" value="Tscrpt_elong_fac_GreA"/>
</dbReference>
<dbReference type="InterPro" id="IPR028624">
    <property type="entry name" value="Tscrpt_elong_fac_GreA/B"/>
</dbReference>
<dbReference type="InterPro" id="IPR001437">
    <property type="entry name" value="Tscrpt_elong_fac_GreA/B_C"/>
</dbReference>
<dbReference type="InterPro" id="IPR023459">
    <property type="entry name" value="Tscrpt_elong_fac_GreA/B_fam"/>
</dbReference>
<dbReference type="InterPro" id="IPR022691">
    <property type="entry name" value="Tscrpt_elong_fac_GreA/B_N"/>
</dbReference>
<dbReference type="InterPro" id="IPR036805">
    <property type="entry name" value="Tscrpt_elong_fac_GreA/B_N_sf"/>
</dbReference>
<dbReference type="NCBIfam" id="TIGR01462">
    <property type="entry name" value="greA"/>
    <property type="match status" value="1"/>
</dbReference>
<dbReference type="NCBIfam" id="NF001261">
    <property type="entry name" value="PRK00226.1-2"/>
    <property type="match status" value="1"/>
</dbReference>
<dbReference type="NCBIfam" id="NF001263">
    <property type="entry name" value="PRK00226.1-4"/>
    <property type="match status" value="1"/>
</dbReference>
<dbReference type="NCBIfam" id="NF001264">
    <property type="entry name" value="PRK00226.1-5"/>
    <property type="match status" value="1"/>
</dbReference>
<dbReference type="PANTHER" id="PTHR30437">
    <property type="entry name" value="TRANSCRIPTION ELONGATION FACTOR GREA"/>
    <property type="match status" value="1"/>
</dbReference>
<dbReference type="PANTHER" id="PTHR30437:SF4">
    <property type="entry name" value="TRANSCRIPTION ELONGATION FACTOR GREA"/>
    <property type="match status" value="1"/>
</dbReference>
<dbReference type="Pfam" id="PF01272">
    <property type="entry name" value="GreA_GreB"/>
    <property type="match status" value="1"/>
</dbReference>
<dbReference type="Pfam" id="PF03449">
    <property type="entry name" value="GreA_GreB_N"/>
    <property type="match status" value="1"/>
</dbReference>
<dbReference type="PIRSF" id="PIRSF006092">
    <property type="entry name" value="GreA_GreB"/>
    <property type="match status" value="1"/>
</dbReference>
<dbReference type="SUPFAM" id="SSF54534">
    <property type="entry name" value="FKBP-like"/>
    <property type="match status" value="1"/>
</dbReference>
<dbReference type="SUPFAM" id="SSF46557">
    <property type="entry name" value="GreA transcript cleavage protein, N-terminal domain"/>
    <property type="match status" value="1"/>
</dbReference>
<dbReference type="PROSITE" id="PS00829">
    <property type="entry name" value="GREAB_1"/>
    <property type="match status" value="1"/>
</dbReference>
<comment type="function">
    <text evidence="1">Necessary for efficient RNA polymerase transcription elongation past template-encoded arresting sites. The arresting sites in DNA have the property of trapping a certain fraction of elongating RNA polymerases that pass through, resulting in locked ternary complexes. Cleavage of the nascent transcript by cleavage factors such as GreA or GreB allows the resumption of elongation from the new 3'terminus. GreA releases sequences of 2 to 3 nucleotides.</text>
</comment>
<comment type="similarity">
    <text evidence="1">Belongs to the GreA/GreB family.</text>
</comment>
<proteinExistence type="inferred from homology"/>
<evidence type="ECO:0000255" key="1">
    <source>
        <dbReference type="HAMAP-Rule" id="MF_00105"/>
    </source>
</evidence>
<gene>
    <name evidence="1" type="primary">greA</name>
    <name type="ordered locus">RHOS4_03560</name>
    <name type="ORF">RSP_1776</name>
</gene>